<feature type="chain" id="PRO_1000214533" description="Large ribosomal subunit protein uL24">
    <location>
        <begin position="1"/>
        <end position="104"/>
    </location>
</feature>
<accession>C1DKM4</accession>
<sequence>MQKIRRDDEIIVIAGKDKGKRGKVLKVLADDRLVVSGVNLIKRHSKPNPMLGVQGGIVEKEAPLHVSNVAIFNAETSKADRVGFKIEDGKKIRIFKSTQKPVDA</sequence>
<keyword id="KW-0687">Ribonucleoprotein</keyword>
<keyword id="KW-0689">Ribosomal protein</keyword>
<keyword id="KW-0694">RNA-binding</keyword>
<keyword id="KW-0699">rRNA-binding</keyword>
<gene>
    <name evidence="1" type="primary">rplX</name>
    <name type="ordered locus">Avin_06360</name>
</gene>
<reference key="1">
    <citation type="journal article" date="2009" name="J. Bacteriol.">
        <title>Genome sequence of Azotobacter vinelandii, an obligate aerobe specialized to support diverse anaerobic metabolic processes.</title>
        <authorList>
            <person name="Setubal J.C."/>
            <person name="Dos Santos P."/>
            <person name="Goldman B.S."/>
            <person name="Ertesvaag H."/>
            <person name="Espin G."/>
            <person name="Rubio L.M."/>
            <person name="Valla S."/>
            <person name="Almeida N.F."/>
            <person name="Balasubramanian D."/>
            <person name="Cromes L."/>
            <person name="Curatti L."/>
            <person name="Du Z."/>
            <person name="Godsy E."/>
            <person name="Goodner B."/>
            <person name="Hellner-Burris K."/>
            <person name="Hernandez J.A."/>
            <person name="Houmiel K."/>
            <person name="Imperial J."/>
            <person name="Kennedy C."/>
            <person name="Larson T.J."/>
            <person name="Latreille P."/>
            <person name="Ligon L.S."/>
            <person name="Lu J."/>
            <person name="Maerk M."/>
            <person name="Miller N.M."/>
            <person name="Norton S."/>
            <person name="O'Carroll I.P."/>
            <person name="Paulsen I."/>
            <person name="Raulfs E.C."/>
            <person name="Roemer R."/>
            <person name="Rosser J."/>
            <person name="Segura D."/>
            <person name="Slater S."/>
            <person name="Stricklin S.L."/>
            <person name="Studholme D.J."/>
            <person name="Sun J."/>
            <person name="Viana C.J."/>
            <person name="Wallin E."/>
            <person name="Wang B."/>
            <person name="Wheeler C."/>
            <person name="Zhu H."/>
            <person name="Dean D.R."/>
            <person name="Dixon R."/>
            <person name="Wood D."/>
        </authorList>
    </citation>
    <scope>NUCLEOTIDE SEQUENCE [LARGE SCALE GENOMIC DNA]</scope>
    <source>
        <strain>DJ / ATCC BAA-1303</strain>
    </source>
</reference>
<dbReference type="EMBL" id="CP001157">
    <property type="protein sequence ID" value="ACO76887.1"/>
    <property type="molecule type" value="Genomic_DNA"/>
</dbReference>
<dbReference type="RefSeq" id="WP_012699313.1">
    <property type="nucleotide sequence ID" value="NC_012560.1"/>
</dbReference>
<dbReference type="SMR" id="C1DKM4"/>
<dbReference type="STRING" id="322710.Avin_06360"/>
<dbReference type="EnsemblBacteria" id="ACO76887">
    <property type="protein sequence ID" value="ACO76887"/>
    <property type="gene ID" value="Avin_06360"/>
</dbReference>
<dbReference type="GeneID" id="88184047"/>
<dbReference type="KEGG" id="avn:Avin_06360"/>
<dbReference type="eggNOG" id="COG0198">
    <property type="taxonomic scope" value="Bacteria"/>
</dbReference>
<dbReference type="HOGENOM" id="CLU_093315_2_2_6"/>
<dbReference type="OrthoDB" id="9807419at2"/>
<dbReference type="Proteomes" id="UP000002424">
    <property type="component" value="Chromosome"/>
</dbReference>
<dbReference type="GO" id="GO:1990904">
    <property type="term" value="C:ribonucleoprotein complex"/>
    <property type="evidence" value="ECO:0007669"/>
    <property type="project" value="UniProtKB-KW"/>
</dbReference>
<dbReference type="GO" id="GO:0005840">
    <property type="term" value="C:ribosome"/>
    <property type="evidence" value="ECO:0007669"/>
    <property type="project" value="UniProtKB-KW"/>
</dbReference>
<dbReference type="GO" id="GO:0019843">
    <property type="term" value="F:rRNA binding"/>
    <property type="evidence" value="ECO:0007669"/>
    <property type="project" value="UniProtKB-UniRule"/>
</dbReference>
<dbReference type="GO" id="GO:0003735">
    <property type="term" value="F:structural constituent of ribosome"/>
    <property type="evidence" value="ECO:0007669"/>
    <property type="project" value="InterPro"/>
</dbReference>
<dbReference type="GO" id="GO:0006412">
    <property type="term" value="P:translation"/>
    <property type="evidence" value="ECO:0007669"/>
    <property type="project" value="UniProtKB-UniRule"/>
</dbReference>
<dbReference type="CDD" id="cd06089">
    <property type="entry name" value="KOW_RPL26"/>
    <property type="match status" value="1"/>
</dbReference>
<dbReference type="FunFam" id="2.30.30.30:FF:000004">
    <property type="entry name" value="50S ribosomal protein L24"/>
    <property type="match status" value="1"/>
</dbReference>
<dbReference type="Gene3D" id="2.30.30.30">
    <property type="match status" value="1"/>
</dbReference>
<dbReference type="HAMAP" id="MF_01326_B">
    <property type="entry name" value="Ribosomal_uL24_B"/>
    <property type="match status" value="1"/>
</dbReference>
<dbReference type="InterPro" id="IPR005824">
    <property type="entry name" value="KOW"/>
</dbReference>
<dbReference type="InterPro" id="IPR014722">
    <property type="entry name" value="Rib_uL2_dom2"/>
</dbReference>
<dbReference type="InterPro" id="IPR003256">
    <property type="entry name" value="Ribosomal_uL24"/>
</dbReference>
<dbReference type="InterPro" id="IPR005825">
    <property type="entry name" value="Ribosomal_uL24_CS"/>
</dbReference>
<dbReference type="InterPro" id="IPR041988">
    <property type="entry name" value="Ribosomal_uL24_KOW"/>
</dbReference>
<dbReference type="InterPro" id="IPR008991">
    <property type="entry name" value="Translation_prot_SH3-like_sf"/>
</dbReference>
<dbReference type="NCBIfam" id="TIGR01079">
    <property type="entry name" value="rplX_bact"/>
    <property type="match status" value="1"/>
</dbReference>
<dbReference type="PANTHER" id="PTHR12903">
    <property type="entry name" value="MITOCHONDRIAL RIBOSOMAL PROTEIN L24"/>
    <property type="match status" value="1"/>
</dbReference>
<dbReference type="Pfam" id="PF00467">
    <property type="entry name" value="KOW"/>
    <property type="match status" value="1"/>
</dbReference>
<dbReference type="Pfam" id="PF17136">
    <property type="entry name" value="ribosomal_L24"/>
    <property type="match status" value="1"/>
</dbReference>
<dbReference type="SMART" id="SM00739">
    <property type="entry name" value="KOW"/>
    <property type="match status" value="1"/>
</dbReference>
<dbReference type="SUPFAM" id="SSF50104">
    <property type="entry name" value="Translation proteins SH3-like domain"/>
    <property type="match status" value="1"/>
</dbReference>
<dbReference type="PROSITE" id="PS01108">
    <property type="entry name" value="RIBOSOMAL_L24"/>
    <property type="match status" value="1"/>
</dbReference>
<organism>
    <name type="scientific">Azotobacter vinelandii (strain DJ / ATCC BAA-1303)</name>
    <dbReference type="NCBI Taxonomy" id="322710"/>
    <lineage>
        <taxon>Bacteria</taxon>
        <taxon>Pseudomonadati</taxon>
        <taxon>Pseudomonadota</taxon>
        <taxon>Gammaproteobacteria</taxon>
        <taxon>Pseudomonadales</taxon>
        <taxon>Pseudomonadaceae</taxon>
        <taxon>Azotobacter</taxon>
    </lineage>
</organism>
<comment type="function">
    <text evidence="1">One of two assembly initiator proteins, it binds directly to the 5'-end of the 23S rRNA, where it nucleates assembly of the 50S subunit.</text>
</comment>
<comment type="function">
    <text evidence="1">One of the proteins that surrounds the polypeptide exit tunnel on the outside of the subunit.</text>
</comment>
<comment type="subunit">
    <text evidence="1">Part of the 50S ribosomal subunit.</text>
</comment>
<comment type="similarity">
    <text evidence="1">Belongs to the universal ribosomal protein uL24 family.</text>
</comment>
<protein>
    <recommendedName>
        <fullName evidence="1">Large ribosomal subunit protein uL24</fullName>
    </recommendedName>
    <alternativeName>
        <fullName evidence="2">50S ribosomal protein L24</fullName>
    </alternativeName>
</protein>
<evidence type="ECO:0000255" key="1">
    <source>
        <dbReference type="HAMAP-Rule" id="MF_01326"/>
    </source>
</evidence>
<evidence type="ECO:0000305" key="2"/>
<proteinExistence type="inferred from homology"/>
<name>RL24_AZOVD</name>